<gene>
    <name evidence="4" type="primary">MADS1</name>
    <name evidence="8" type="ordered locus">VIT_12s0142g00360</name>
</gene>
<proteinExistence type="evidence at transcript level"/>
<name>MADS1_VITVI</name>
<evidence type="ECO:0000250" key="1">
    <source>
        <dbReference type="UniProtKB" id="Q0HA25"/>
    </source>
</evidence>
<evidence type="ECO:0000255" key="2">
    <source>
        <dbReference type="PROSITE-ProRule" id="PRU00251"/>
    </source>
</evidence>
<evidence type="ECO:0000269" key="3">
    <source>
    </source>
</evidence>
<evidence type="ECO:0000303" key="4">
    <source>
    </source>
</evidence>
<evidence type="ECO:0000303" key="5">
    <source>
    </source>
</evidence>
<evidence type="ECO:0000303" key="6">
    <source>
    </source>
</evidence>
<evidence type="ECO:0000305" key="7"/>
<evidence type="ECO:0000312" key="8">
    <source>
        <dbReference type="EMBL" id="CCB56406.1"/>
    </source>
</evidence>
<accession>Q93XH4</accession>
<accession>F6HP00</accession>
<reference key="1">
    <citation type="journal article" date="2001" name="Plant Mol. Biol.">
        <title>A cDNA from grapevine (Vitis vinifera L.), which shows homology to AGAMOUS and SHATTERPROOF, is not only expressed in flowers but also throughout berry development.</title>
        <authorList>
            <person name="Boss P.K."/>
            <person name="Vivier M."/>
            <person name="Matsumoto S."/>
            <person name="Dry I.B."/>
            <person name="Thomas M.R."/>
        </authorList>
    </citation>
    <scope>NUCLEOTIDE SEQUENCE [MRNA]</scope>
    <scope>TISSUE SPECIFICITY</scope>
    <source>
        <strain>cv. Shiraz</strain>
        <tissue>Flower</tissue>
    </source>
</reference>
<reference key="2">
    <citation type="journal article" date="2007" name="Nature">
        <title>The grapevine genome sequence suggests ancestral hexaploidization in major angiosperm phyla.</title>
        <authorList>
            <person name="Jaillon O."/>
            <person name="Aury J.-M."/>
            <person name="Noel B."/>
            <person name="Policriti A."/>
            <person name="Clepet C."/>
            <person name="Casagrande A."/>
            <person name="Choisne N."/>
            <person name="Aubourg S."/>
            <person name="Vitulo N."/>
            <person name="Jubin C."/>
            <person name="Vezzi A."/>
            <person name="Legeai F."/>
            <person name="Hugueney P."/>
            <person name="Dasilva C."/>
            <person name="Horner D."/>
            <person name="Mica E."/>
            <person name="Jublot D."/>
            <person name="Poulain J."/>
            <person name="Bruyere C."/>
            <person name="Billault A."/>
            <person name="Segurens B."/>
            <person name="Gouyvenoux M."/>
            <person name="Ugarte E."/>
            <person name="Cattonaro F."/>
            <person name="Anthouard V."/>
            <person name="Vico V."/>
            <person name="Del Fabbro C."/>
            <person name="Alaux M."/>
            <person name="Di Gaspero G."/>
            <person name="Dumas V."/>
            <person name="Felice N."/>
            <person name="Paillard S."/>
            <person name="Juman I."/>
            <person name="Moroldo M."/>
            <person name="Scalabrin S."/>
            <person name="Canaguier A."/>
            <person name="Le Clainche I."/>
            <person name="Malacrida G."/>
            <person name="Durand E."/>
            <person name="Pesole G."/>
            <person name="Laucou V."/>
            <person name="Chatelet P."/>
            <person name="Merdinoglu D."/>
            <person name="Delledonne M."/>
            <person name="Pezzotti M."/>
            <person name="Lecharny A."/>
            <person name="Scarpelli C."/>
            <person name="Artiguenave F."/>
            <person name="Pe M.E."/>
            <person name="Valle G."/>
            <person name="Morgante M."/>
            <person name="Caboche M."/>
            <person name="Adam-Blondon A.-F."/>
            <person name="Weissenbach J."/>
            <person name="Quetier F."/>
            <person name="Wincker P."/>
        </authorList>
    </citation>
    <scope>NUCLEOTIDE SEQUENCE [LARGE SCALE GENOMIC DNA]</scope>
    <source>
        <strain>cv. Pinot noir / PN40024</strain>
    </source>
</reference>
<reference key="3">
    <citation type="journal article" date="2009" name="Plant Physiol.">
        <title>Genome-wide analysis of MIKCC-type MADS box genes in grapevine.</title>
        <authorList>
            <person name="Diaz-Riquelme J."/>
            <person name="Lijavetzky D."/>
            <person name="Martinez-Zapater J.M."/>
            <person name="Carmona M.J."/>
        </authorList>
    </citation>
    <scope>GENE FAMILY</scope>
</reference>
<reference key="4">
    <citation type="journal article" date="2016" name="BMC Genomics">
        <title>Structural and functional annotation of the MADS-box transcription factor family in grapevine.</title>
        <authorList>
            <person name="Grimplet J."/>
            <person name="Martinez-Zapater J.M."/>
            <person name="Carmona M.J."/>
        </authorList>
    </citation>
    <scope>GENE FAMILY</scope>
</reference>
<sequence>MGRGKIEIKRIENTTNRQVTFCKRRNGLLKKAYELSVLCDAEVALIVFSSRGRLYEYANNSVRTTIERYKKVCSDSSNTGSVSEANAQFYQQEASKLRRQIRDIQNLNRHILGEALSSLNFKELKNLETRLEKGISRIRSKKNELLFAEIEYMQKREIELQNSNLFLRAQIAENERAQQQMNLMPGSQYESVPQQPYDSQNLLPVNLLDPNHHYSRHDQTALQLV</sequence>
<comment type="function">
    <text evidence="1">Probable transcription factor involved in flower development.</text>
</comment>
<comment type="subcellular location">
    <subcellularLocation>
        <location evidence="2">Nucleus</location>
    </subcellularLocation>
</comment>
<comment type="tissue specificity">
    <text evidence="3">Expressed in flowers and seeds.</text>
</comment>
<comment type="sequence caution" evidence="7">
    <conflict type="erroneous gene model prediction">
        <sequence resource="EMBL-CDS" id="CCB56406"/>
    </conflict>
</comment>
<feature type="chain" id="PRO_0000447289" description="Agamous-like MADS-box protein MADS1">
    <location>
        <begin position="1"/>
        <end position="225"/>
    </location>
</feature>
<protein>
    <recommendedName>
        <fullName evidence="7">Agamous-like MADS-box protein MADS1</fullName>
    </recommendedName>
    <alternativeName>
        <fullName evidence="7">Agamous homolog 1</fullName>
        <shortName evidence="5">VvAG1</shortName>
        <shortName evidence="6">VviAG1</shortName>
    </alternativeName>
    <alternativeName>
        <fullName evidence="4">MADS-box protein 1</fullName>
        <shortName evidence="4">Vvmads1</shortName>
    </alternativeName>
</protein>
<organism>
    <name type="scientific">Vitis vinifera</name>
    <name type="common">Grape</name>
    <dbReference type="NCBI Taxonomy" id="29760"/>
    <lineage>
        <taxon>Eukaryota</taxon>
        <taxon>Viridiplantae</taxon>
        <taxon>Streptophyta</taxon>
        <taxon>Embryophyta</taxon>
        <taxon>Tracheophyta</taxon>
        <taxon>Spermatophyta</taxon>
        <taxon>Magnoliopsida</taxon>
        <taxon>eudicotyledons</taxon>
        <taxon>Gunneridae</taxon>
        <taxon>Pentapetalae</taxon>
        <taxon>rosids</taxon>
        <taxon>Vitales</taxon>
        <taxon>Vitaceae</taxon>
        <taxon>Viteae</taxon>
        <taxon>Vitis</taxon>
    </lineage>
</organism>
<keyword id="KW-0238">DNA-binding</keyword>
<keyword id="KW-0287">Flowering</keyword>
<keyword id="KW-0539">Nucleus</keyword>
<keyword id="KW-1185">Reference proteome</keyword>
<keyword id="KW-0804">Transcription</keyword>
<keyword id="KW-0805">Transcription regulation</keyword>
<dbReference type="EMBL" id="AF265562">
    <property type="protein sequence ID" value="AAK58564.1"/>
    <property type="molecule type" value="mRNA"/>
</dbReference>
<dbReference type="EMBL" id="FN595999">
    <property type="protein sequence ID" value="CCB56406.1"/>
    <property type="status" value="ALT_SEQ"/>
    <property type="molecule type" value="Genomic_DNA"/>
</dbReference>
<dbReference type="EMBL" id="FN597034">
    <property type="status" value="NOT_ANNOTATED_CDS"/>
    <property type="molecule type" value="Genomic_DNA"/>
</dbReference>
<dbReference type="RefSeq" id="NP_001268105.1">
    <property type="nucleotide sequence ID" value="NM_001281176.1"/>
</dbReference>
<dbReference type="RefSeq" id="XP_010656929.1">
    <property type="nucleotide sequence ID" value="XM_010658627.2"/>
</dbReference>
<dbReference type="SMR" id="Q93XH4"/>
<dbReference type="FunCoup" id="Q93XH4">
    <property type="interactions" value="18"/>
</dbReference>
<dbReference type="STRING" id="29760.Q93XH4"/>
<dbReference type="PaxDb" id="29760-VIT_12s0142g00360.t01"/>
<dbReference type="EnsemblPlants" id="Vitvi12g00019_t003">
    <property type="protein sequence ID" value="Vitvi12g00019_P003"/>
    <property type="gene ID" value="Vitvi12g00019"/>
</dbReference>
<dbReference type="EnsemblPlants" id="Vitvi12g00019_t005">
    <property type="protein sequence ID" value="Vitvi12g00019_P005"/>
    <property type="gene ID" value="Vitvi12g00019"/>
</dbReference>
<dbReference type="GeneID" id="100232864"/>
<dbReference type="Gramene" id="Vitvi12g00019_t003">
    <property type="protein sequence ID" value="Vitvi12g00019_P003"/>
    <property type="gene ID" value="Vitvi12g00019"/>
</dbReference>
<dbReference type="Gramene" id="Vitvi12g00019_t005">
    <property type="protein sequence ID" value="Vitvi12g00019_P005"/>
    <property type="gene ID" value="Vitvi12g00019"/>
</dbReference>
<dbReference type="KEGG" id="vvi:100232864"/>
<dbReference type="eggNOG" id="KOG0014">
    <property type="taxonomic scope" value="Eukaryota"/>
</dbReference>
<dbReference type="HOGENOM" id="CLU_053053_0_0_1"/>
<dbReference type="InParanoid" id="Q93XH4"/>
<dbReference type="Proteomes" id="UP000009183">
    <property type="component" value="Chromosome 12"/>
</dbReference>
<dbReference type="ExpressionAtlas" id="Q93XH4">
    <property type="expression patterns" value="baseline and differential"/>
</dbReference>
<dbReference type="GO" id="GO:0005634">
    <property type="term" value="C:nucleus"/>
    <property type="evidence" value="ECO:0007669"/>
    <property type="project" value="UniProtKB-SubCell"/>
</dbReference>
<dbReference type="GO" id="GO:0000981">
    <property type="term" value="F:DNA-binding transcription factor activity, RNA polymerase II-specific"/>
    <property type="evidence" value="ECO:0000318"/>
    <property type="project" value="GO_Central"/>
</dbReference>
<dbReference type="GO" id="GO:0046983">
    <property type="term" value="F:protein dimerization activity"/>
    <property type="evidence" value="ECO:0007669"/>
    <property type="project" value="InterPro"/>
</dbReference>
<dbReference type="GO" id="GO:0000978">
    <property type="term" value="F:RNA polymerase II cis-regulatory region sequence-specific DNA binding"/>
    <property type="evidence" value="ECO:0000318"/>
    <property type="project" value="GO_Central"/>
</dbReference>
<dbReference type="GO" id="GO:0009908">
    <property type="term" value="P:flower development"/>
    <property type="evidence" value="ECO:0007669"/>
    <property type="project" value="UniProtKB-KW"/>
</dbReference>
<dbReference type="GO" id="GO:0045944">
    <property type="term" value="P:positive regulation of transcription by RNA polymerase II"/>
    <property type="evidence" value="ECO:0007669"/>
    <property type="project" value="InterPro"/>
</dbReference>
<dbReference type="GO" id="GO:0006357">
    <property type="term" value="P:regulation of transcription by RNA polymerase II"/>
    <property type="evidence" value="ECO:0000318"/>
    <property type="project" value="GO_Central"/>
</dbReference>
<dbReference type="CDD" id="cd00265">
    <property type="entry name" value="MADS_MEF2_like"/>
    <property type="match status" value="1"/>
</dbReference>
<dbReference type="FunFam" id="3.40.1810.10:FF:000009">
    <property type="entry name" value="agamous-like MADS-box protein AGL11"/>
    <property type="match status" value="1"/>
</dbReference>
<dbReference type="Gene3D" id="3.40.1810.10">
    <property type="entry name" value="Transcription factor, MADS-box"/>
    <property type="match status" value="1"/>
</dbReference>
<dbReference type="InterPro" id="IPR050142">
    <property type="entry name" value="MADS-box/MEF2_TF"/>
</dbReference>
<dbReference type="InterPro" id="IPR033896">
    <property type="entry name" value="MEF2-like_N"/>
</dbReference>
<dbReference type="InterPro" id="IPR002487">
    <property type="entry name" value="TF_Kbox"/>
</dbReference>
<dbReference type="InterPro" id="IPR002100">
    <property type="entry name" value="TF_MADSbox"/>
</dbReference>
<dbReference type="InterPro" id="IPR036879">
    <property type="entry name" value="TF_MADSbox_sf"/>
</dbReference>
<dbReference type="PANTHER" id="PTHR48019">
    <property type="entry name" value="SERUM RESPONSE FACTOR HOMOLOG"/>
    <property type="match status" value="1"/>
</dbReference>
<dbReference type="Pfam" id="PF01486">
    <property type="entry name" value="K-box"/>
    <property type="match status" value="1"/>
</dbReference>
<dbReference type="Pfam" id="PF00319">
    <property type="entry name" value="SRF-TF"/>
    <property type="match status" value="1"/>
</dbReference>
<dbReference type="PRINTS" id="PR00404">
    <property type="entry name" value="MADSDOMAIN"/>
</dbReference>
<dbReference type="SMART" id="SM00432">
    <property type="entry name" value="MADS"/>
    <property type="match status" value="1"/>
</dbReference>
<dbReference type="SUPFAM" id="SSF55455">
    <property type="entry name" value="SRF-like"/>
    <property type="match status" value="1"/>
</dbReference>
<dbReference type="PROSITE" id="PS51297">
    <property type="entry name" value="K_BOX"/>
    <property type="match status" value="1"/>
</dbReference>
<dbReference type="PROSITE" id="PS00350">
    <property type="entry name" value="MADS_BOX_1"/>
    <property type="match status" value="1"/>
</dbReference>
<dbReference type="PROSITE" id="PS50066">
    <property type="entry name" value="MADS_BOX_2"/>
    <property type="match status" value="1"/>
</dbReference>